<sequence>MQAQTLHIRHLGMQDYESTWHAMQEYTDTRDSDSQDELWIVEHPPVFTQGQAGKSEHILNPGDIPVIQVDRGGQVTYHGPGQLVVYPLIDIKRNKLGVRQLVNNIEQSIIDMLAYYAINAYAKADAPGVYVTEQKIASLGLRIRKGCSFHGLALNVDMDLAPFQRINPCGYAGLEMVQCKALGGPQTVLEAGDKLIQTFSQIMGYQQLVHHQGLAE</sequence>
<accession>Q087L4</accession>
<dbReference type="EC" id="2.3.1.181" evidence="1"/>
<dbReference type="EMBL" id="CP000447">
    <property type="protein sequence ID" value="ABI70551.1"/>
    <property type="molecule type" value="Genomic_DNA"/>
</dbReference>
<dbReference type="RefSeq" id="WP_011636176.1">
    <property type="nucleotide sequence ID" value="NC_008345.1"/>
</dbReference>
<dbReference type="SMR" id="Q087L4"/>
<dbReference type="STRING" id="318167.Sfri_0693"/>
<dbReference type="KEGG" id="sfr:Sfri_0693"/>
<dbReference type="eggNOG" id="COG0321">
    <property type="taxonomic scope" value="Bacteria"/>
</dbReference>
<dbReference type="HOGENOM" id="CLU_035168_3_1_6"/>
<dbReference type="OrthoDB" id="9787061at2"/>
<dbReference type="UniPathway" id="UPA00538">
    <property type="reaction ID" value="UER00592"/>
</dbReference>
<dbReference type="Proteomes" id="UP000000684">
    <property type="component" value="Chromosome"/>
</dbReference>
<dbReference type="GO" id="GO:0005737">
    <property type="term" value="C:cytoplasm"/>
    <property type="evidence" value="ECO:0007669"/>
    <property type="project" value="UniProtKB-SubCell"/>
</dbReference>
<dbReference type="GO" id="GO:0033819">
    <property type="term" value="F:lipoyl(octanoyl) transferase activity"/>
    <property type="evidence" value="ECO:0007669"/>
    <property type="project" value="UniProtKB-EC"/>
</dbReference>
<dbReference type="GO" id="GO:0036211">
    <property type="term" value="P:protein modification process"/>
    <property type="evidence" value="ECO:0007669"/>
    <property type="project" value="InterPro"/>
</dbReference>
<dbReference type="CDD" id="cd16444">
    <property type="entry name" value="LipB"/>
    <property type="match status" value="1"/>
</dbReference>
<dbReference type="FunFam" id="3.30.930.10:FF:000020">
    <property type="entry name" value="Octanoyltransferase"/>
    <property type="match status" value="1"/>
</dbReference>
<dbReference type="Gene3D" id="3.30.930.10">
    <property type="entry name" value="Bira Bifunctional Protein, Domain 2"/>
    <property type="match status" value="1"/>
</dbReference>
<dbReference type="HAMAP" id="MF_00013">
    <property type="entry name" value="LipB"/>
    <property type="match status" value="1"/>
</dbReference>
<dbReference type="InterPro" id="IPR045864">
    <property type="entry name" value="aa-tRNA-synth_II/BPL/LPL"/>
</dbReference>
<dbReference type="InterPro" id="IPR004143">
    <property type="entry name" value="BPL_LPL_catalytic"/>
</dbReference>
<dbReference type="InterPro" id="IPR000544">
    <property type="entry name" value="Octanoyltransferase"/>
</dbReference>
<dbReference type="InterPro" id="IPR020605">
    <property type="entry name" value="Octanoyltransferase_CS"/>
</dbReference>
<dbReference type="NCBIfam" id="TIGR00214">
    <property type="entry name" value="lipB"/>
    <property type="match status" value="1"/>
</dbReference>
<dbReference type="NCBIfam" id="NF010922">
    <property type="entry name" value="PRK14342.1"/>
    <property type="match status" value="1"/>
</dbReference>
<dbReference type="PANTHER" id="PTHR10993:SF7">
    <property type="entry name" value="LIPOYLTRANSFERASE 2, MITOCHONDRIAL-RELATED"/>
    <property type="match status" value="1"/>
</dbReference>
<dbReference type="PANTHER" id="PTHR10993">
    <property type="entry name" value="OCTANOYLTRANSFERASE"/>
    <property type="match status" value="1"/>
</dbReference>
<dbReference type="Pfam" id="PF21948">
    <property type="entry name" value="LplA-B_cat"/>
    <property type="match status" value="1"/>
</dbReference>
<dbReference type="PIRSF" id="PIRSF016262">
    <property type="entry name" value="LPLase"/>
    <property type="match status" value="1"/>
</dbReference>
<dbReference type="SUPFAM" id="SSF55681">
    <property type="entry name" value="Class II aaRS and biotin synthetases"/>
    <property type="match status" value="1"/>
</dbReference>
<dbReference type="PROSITE" id="PS51733">
    <property type="entry name" value="BPL_LPL_CATALYTIC"/>
    <property type="match status" value="1"/>
</dbReference>
<dbReference type="PROSITE" id="PS01313">
    <property type="entry name" value="LIPB"/>
    <property type="match status" value="1"/>
</dbReference>
<reference key="1">
    <citation type="submission" date="2006-08" db="EMBL/GenBank/DDBJ databases">
        <title>Complete sequence of Shewanella frigidimarina NCIMB 400.</title>
        <authorList>
            <consortium name="US DOE Joint Genome Institute"/>
            <person name="Copeland A."/>
            <person name="Lucas S."/>
            <person name="Lapidus A."/>
            <person name="Barry K."/>
            <person name="Detter J.C."/>
            <person name="Glavina del Rio T."/>
            <person name="Hammon N."/>
            <person name="Israni S."/>
            <person name="Dalin E."/>
            <person name="Tice H."/>
            <person name="Pitluck S."/>
            <person name="Fredrickson J.K."/>
            <person name="Kolker E."/>
            <person name="McCuel L.A."/>
            <person name="DiChristina T."/>
            <person name="Nealson K.H."/>
            <person name="Newman D."/>
            <person name="Tiedje J.M."/>
            <person name="Zhou J."/>
            <person name="Romine M.F."/>
            <person name="Culley D.E."/>
            <person name="Serres M."/>
            <person name="Chertkov O."/>
            <person name="Brettin T."/>
            <person name="Bruce D."/>
            <person name="Han C."/>
            <person name="Tapia R."/>
            <person name="Gilna P."/>
            <person name="Schmutz J."/>
            <person name="Larimer F."/>
            <person name="Land M."/>
            <person name="Hauser L."/>
            <person name="Kyrpides N."/>
            <person name="Mikhailova N."/>
            <person name="Richardson P."/>
        </authorList>
    </citation>
    <scope>NUCLEOTIDE SEQUENCE [LARGE SCALE GENOMIC DNA]</scope>
    <source>
        <strain>NCIMB 400</strain>
    </source>
</reference>
<feature type="chain" id="PRO_1000001131" description="Octanoyltransferase">
    <location>
        <begin position="1"/>
        <end position="216"/>
    </location>
</feature>
<feature type="domain" description="BPL/LPL catalytic" evidence="2">
    <location>
        <begin position="32"/>
        <end position="207"/>
    </location>
</feature>
<feature type="active site" description="Acyl-thioester intermediate" evidence="1">
    <location>
        <position position="169"/>
    </location>
</feature>
<feature type="binding site" evidence="1">
    <location>
        <begin position="71"/>
        <end position="78"/>
    </location>
    <ligand>
        <name>substrate</name>
    </ligand>
</feature>
<feature type="binding site" evidence="1">
    <location>
        <begin position="138"/>
        <end position="140"/>
    </location>
    <ligand>
        <name>substrate</name>
    </ligand>
</feature>
<feature type="binding site" evidence="1">
    <location>
        <begin position="151"/>
        <end position="153"/>
    </location>
    <ligand>
        <name>substrate</name>
    </ligand>
</feature>
<feature type="site" description="Lowers pKa of active site Cys" evidence="1">
    <location>
        <position position="135"/>
    </location>
</feature>
<keyword id="KW-0012">Acyltransferase</keyword>
<keyword id="KW-0963">Cytoplasm</keyword>
<keyword id="KW-1185">Reference proteome</keyword>
<keyword id="KW-0808">Transferase</keyword>
<comment type="function">
    <text evidence="1">Catalyzes the transfer of endogenously produced octanoic acid from octanoyl-acyl-carrier-protein onto the lipoyl domains of lipoate-dependent enzymes. Lipoyl-ACP can also act as a substrate although octanoyl-ACP is likely to be the physiological substrate.</text>
</comment>
<comment type="catalytic activity">
    <reaction evidence="1">
        <text>octanoyl-[ACP] + L-lysyl-[protein] = N(6)-octanoyl-L-lysyl-[protein] + holo-[ACP] + H(+)</text>
        <dbReference type="Rhea" id="RHEA:17665"/>
        <dbReference type="Rhea" id="RHEA-COMP:9636"/>
        <dbReference type="Rhea" id="RHEA-COMP:9685"/>
        <dbReference type="Rhea" id="RHEA-COMP:9752"/>
        <dbReference type="Rhea" id="RHEA-COMP:9928"/>
        <dbReference type="ChEBI" id="CHEBI:15378"/>
        <dbReference type="ChEBI" id="CHEBI:29969"/>
        <dbReference type="ChEBI" id="CHEBI:64479"/>
        <dbReference type="ChEBI" id="CHEBI:78463"/>
        <dbReference type="ChEBI" id="CHEBI:78809"/>
        <dbReference type="EC" id="2.3.1.181"/>
    </reaction>
</comment>
<comment type="pathway">
    <text evidence="1">Protein modification; protein lipoylation via endogenous pathway; protein N(6)-(lipoyl)lysine from octanoyl-[acyl-carrier-protein]: step 1/2.</text>
</comment>
<comment type="subcellular location">
    <subcellularLocation>
        <location evidence="1">Cytoplasm</location>
    </subcellularLocation>
</comment>
<comment type="miscellaneous">
    <text evidence="1">In the reaction, the free carboxyl group of octanoic acid is attached via an amide linkage to the epsilon-amino group of a specific lysine residue of lipoyl domains of lipoate-dependent enzymes.</text>
</comment>
<comment type="similarity">
    <text evidence="1">Belongs to the LipB family.</text>
</comment>
<name>LIPB_SHEFN</name>
<protein>
    <recommendedName>
        <fullName evidence="1">Octanoyltransferase</fullName>
        <ecNumber evidence="1">2.3.1.181</ecNumber>
    </recommendedName>
    <alternativeName>
        <fullName evidence="1">Lipoate-protein ligase B</fullName>
    </alternativeName>
    <alternativeName>
        <fullName evidence="1">Lipoyl/octanoyl transferase</fullName>
    </alternativeName>
    <alternativeName>
        <fullName evidence="1">Octanoyl-[acyl-carrier-protein]-protein N-octanoyltransferase</fullName>
    </alternativeName>
</protein>
<gene>
    <name evidence="1" type="primary">lipB</name>
    <name type="ordered locus">Sfri_0693</name>
</gene>
<proteinExistence type="inferred from homology"/>
<organism>
    <name type="scientific">Shewanella frigidimarina (strain NCIMB 400)</name>
    <dbReference type="NCBI Taxonomy" id="318167"/>
    <lineage>
        <taxon>Bacteria</taxon>
        <taxon>Pseudomonadati</taxon>
        <taxon>Pseudomonadota</taxon>
        <taxon>Gammaproteobacteria</taxon>
        <taxon>Alteromonadales</taxon>
        <taxon>Shewanellaceae</taxon>
        <taxon>Shewanella</taxon>
    </lineage>
</organism>
<evidence type="ECO:0000255" key="1">
    <source>
        <dbReference type="HAMAP-Rule" id="MF_00013"/>
    </source>
</evidence>
<evidence type="ECO:0000255" key="2">
    <source>
        <dbReference type="PROSITE-ProRule" id="PRU01067"/>
    </source>
</evidence>